<proteinExistence type="evidence at transcript level"/>
<organism>
    <name type="scientific">Schistosoma japonicum</name>
    <name type="common">Blood fluke</name>
    <dbReference type="NCBI Taxonomy" id="6182"/>
    <lineage>
        <taxon>Eukaryota</taxon>
        <taxon>Metazoa</taxon>
        <taxon>Spiralia</taxon>
        <taxon>Lophotrochozoa</taxon>
        <taxon>Platyhelminthes</taxon>
        <taxon>Trematoda</taxon>
        <taxon>Digenea</taxon>
        <taxon>Strigeidida</taxon>
        <taxon>Schistosomatoidea</taxon>
        <taxon>Schistosomatidae</taxon>
        <taxon>Schistosoma</taxon>
    </lineage>
</organism>
<name>TCTP_SCHJA</name>
<gene>
    <name type="primary">TCTP</name>
</gene>
<accession>P91800</accession>
<evidence type="ECO:0000250" key="1"/>
<evidence type="ECO:0000255" key="2">
    <source>
        <dbReference type="PROSITE-ProRule" id="PRU01133"/>
    </source>
</evidence>
<feature type="chain" id="PRO_0000211294" description="Translationally-controlled tumor protein homolog">
    <location>
        <begin position="1"/>
        <end position="169"/>
    </location>
</feature>
<feature type="domain" description="TCTP" evidence="2">
    <location>
        <begin position="1"/>
        <end position="169"/>
    </location>
</feature>
<sequence>MRVFKDAISGDEMFSDSHSPQLINDVVYEVDANFITVSNGLDSKLIAANPSGEEGQEEVSDSTERVIDLVHASRLVSTSFDKKSYRAYLKGYLKAIKERLQKENPERVSIFESRINEYMVNVFKNFDDYEHYIGESMNPDGMVALMNFRENGVTPYFVFLKDGLIEEKY</sequence>
<comment type="function">
    <text evidence="1">Involved in calcium binding and microtubule stabilization.</text>
</comment>
<comment type="subcellular location">
    <subcellularLocation>
        <location evidence="1">Cytoplasm</location>
    </subcellularLocation>
</comment>
<comment type="similarity">
    <text evidence="2">Belongs to the TCTP family.</text>
</comment>
<reference key="1">
    <citation type="submission" date="1997-01" db="EMBL/GenBank/DDBJ databases">
        <title>Characterization of a cDNA encoding a homolog of translationally controlled tumor protein (TCTP) in S. japonicum.</title>
        <authorList>
            <person name="Fan J."/>
            <person name="Drew A."/>
            <person name="Brindley P.J."/>
        </authorList>
    </citation>
    <scope>NUCLEOTIDE SEQUENCE [MRNA]</scope>
    <source>
        <strain>Chinese</strain>
    </source>
</reference>
<protein>
    <recommendedName>
        <fullName>Translationally-controlled tumor protein homolog</fullName>
        <shortName>TCTP</shortName>
    </recommendedName>
</protein>
<keyword id="KW-0106">Calcium</keyword>
<keyword id="KW-0963">Cytoplasm</keyword>
<dbReference type="EMBL" id="U85483">
    <property type="protein sequence ID" value="AAB42079.1"/>
    <property type="molecule type" value="mRNA"/>
</dbReference>
<dbReference type="SMR" id="P91800"/>
<dbReference type="GO" id="GO:0005737">
    <property type="term" value="C:cytoplasm"/>
    <property type="evidence" value="ECO:0007669"/>
    <property type="project" value="UniProtKB-SubCell"/>
</dbReference>
<dbReference type="GO" id="GO:0005509">
    <property type="term" value="F:calcium ion binding"/>
    <property type="evidence" value="ECO:0007669"/>
    <property type="project" value="TreeGrafter"/>
</dbReference>
<dbReference type="FunFam" id="2.170.150.10:FF:000002">
    <property type="entry name" value="Translationally-controlled tumor protein homolog"/>
    <property type="match status" value="1"/>
</dbReference>
<dbReference type="Gene3D" id="2.170.150.10">
    <property type="entry name" value="Metal Binding Protein, Guanine Nucleotide Exchange Factor, Chain A"/>
    <property type="match status" value="1"/>
</dbReference>
<dbReference type="InterPro" id="IPR011057">
    <property type="entry name" value="Mss4-like_sf"/>
</dbReference>
<dbReference type="InterPro" id="IPR011323">
    <property type="entry name" value="Mss4/transl-control_tumour"/>
</dbReference>
<dbReference type="InterPro" id="IPR034737">
    <property type="entry name" value="TCTP"/>
</dbReference>
<dbReference type="InterPro" id="IPR018103">
    <property type="entry name" value="Translation_control_tumour_CS"/>
</dbReference>
<dbReference type="InterPro" id="IPR018105">
    <property type="entry name" value="Translational_control_tumour_p"/>
</dbReference>
<dbReference type="PANTHER" id="PTHR11991">
    <property type="entry name" value="TRANSLATIONALLY CONTROLLED TUMOR PROTEIN-RELATED"/>
    <property type="match status" value="1"/>
</dbReference>
<dbReference type="PANTHER" id="PTHR11991:SF0">
    <property type="entry name" value="TRANSLATIONALLY-CONTROLLED TUMOR PROTEIN"/>
    <property type="match status" value="1"/>
</dbReference>
<dbReference type="Pfam" id="PF00838">
    <property type="entry name" value="TCTP"/>
    <property type="match status" value="1"/>
</dbReference>
<dbReference type="PRINTS" id="PR01653">
    <property type="entry name" value="TCTPROTEIN"/>
</dbReference>
<dbReference type="SUPFAM" id="SSF51316">
    <property type="entry name" value="Mss4-like"/>
    <property type="match status" value="1"/>
</dbReference>
<dbReference type="PROSITE" id="PS01002">
    <property type="entry name" value="TCTP_1"/>
    <property type="match status" value="1"/>
</dbReference>
<dbReference type="PROSITE" id="PS01003">
    <property type="entry name" value="TCTP_2"/>
    <property type="match status" value="1"/>
</dbReference>
<dbReference type="PROSITE" id="PS51797">
    <property type="entry name" value="TCTP_3"/>
    <property type="match status" value="1"/>
</dbReference>